<evidence type="ECO:0000255" key="1">
    <source>
        <dbReference type="HAMAP-Rule" id="MF_00504"/>
    </source>
</evidence>
<proteinExistence type="inferred from homology"/>
<protein>
    <recommendedName>
        <fullName evidence="1">Peptidase B</fullName>
        <ecNumber evidence="1">3.4.11.23</ecNumber>
    </recommendedName>
    <alternativeName>
        <fullName evidence="1">Aminopeptidase B</fullName>
    </alternativeName>
</protein>
<comment type="function">
    <text evidence="1">Probably plays an important role in intracellular peptide degradation.</text>
</comment>
<comment type="catalytic activity">
    <reaction evidence="1">
        <text>Release of an N-terminal amino acid, Xaa, from a peptide or arylamide. Xaa is preferably Glu or Asp but may be other amino acids, including Leu, Met, His, Cys and Gln.</text>
        <dbReference type="EC" id="3.4.11.23"/>
    </reaction>
</comment>
<comment type="cofactor">
    <cofactor evidence="1">
        <name>Mn(2+)</name>
        <dbReference type="ChEBI" id="CHEBI:29035"/>
    </cofactor>
    <text evidence="1">Binds 2 manganese ions per subunit.</text>
</comment>
<comment type="subunit">
    <text evidence="1">Homohexamer.</text>
</comment>
<comment type="subcellular location">
    <subcellularLocation>
        <location evidence="1">Cytoplasm</location>
    </subcellularLocation>
</comment>
<comment type="similarity">
    <text evidence="1">Belongs to the peptidase M17 family.</text>
</comment>
<feature type="chain" id="PRO_1000206567" description="Peptidase B">
    <location>
        <begin position="1"/>
        <end position="436"/>
    </location>
</feature>
<feature type="active site" evidence="1">
    <location>
        <position position="213"/>
    </location>
</feature>
<feature type="active site" evidence="1">
    <location>
        <position position="287"/>
    </location>
</feature>
<feature type="binding site" evidence="1">
    <location>
        <position position="201"/>
    </location>
    <ligand>
        <name>Mn(2+)</name>
        <dbReference type="ChEBI" id="CHEBI:29035"/>
        <label>2</label>
    </ligand>
</feature>
<feature type="binding site" evidence="1">
    <location>
        <position position="206"/>
    </location>
    <ligand>
        <name>Mn(2+)</name>
        <dbReference type="ChEBI" id="CHEBI:29035"/>
        <label>1</label>
    </ligand>
</feature>
<feature type="binding site" evidence="1">
    <location>
        <position position="206"/>
    </location>
    <ligand>
        <name>Mn(2+)</name>
        <dbReference type="ChEBI" id="CHEBI:29035"/>
        <label>2</label>
    </ligand>
</feature>
<feature type="binding site" evidence="1">
    <location>
        <position position="224"/>
    </location>
    <ligand>
        <name>Mn(2+)</name>
        <dbReference type="ChEBI" id="CHEBI:29035"/>
        <label>2</label>
    </ligand>
</feature>
<feature type="binding site" evidence="1">
    <location>
        <position position="283"/>
    </location>
    <ligand>
        <name>Mn(2+)</name>
        <dbReference type="ChEBI" id="CHEBI:29035"/>
        <label>1</label>
    </ligand>
</feature>
<feature type="binding site" evidence="1">
    <location>
        <position position="285"/>
    </location>
    <ligand>
        <name>Mn(2+)</name>
        <dbReference type="ChEBI" id="CHEBI:29035"/>
        <label>1</label>
    </ligand>
</feature>
<feature type="binding site" evidence="1">
    <location>
        <position position="285"/>
    </location>
    <ligand>
        <name>Mn(2+)</name>
        <dbReference type="ChEBI" id="CHEBI:29035"/>
        <label>2</label>
    </ligand>
</feature>
<name>PEPB_PECCP</name>
<sequence length="436" mass="47133">MTNNTMLISLSTQPADARWGEKATLSVNEQGFTIHVGTTSLNGKAALATIQRAARKIDGQGIKHVKLAGEGWDLANSWAFWQGYRGPKGQRTVEWADLSDADKKELNDRLKIVDWVRDTINLPAEDLGPEQLATRAVDLLCDVACDAISYRITKGEDLREQNYAGLHTVGRGSERQPVLLALDYNPTGNADAPVFACLVGKGITFDTGGYSLKPSSSMDSMKSDMGGAATLTGALALAASRGLQQRVKLYLCCADNMVSGNAFRLGDIIRYRNGKTVEVMNTDAEGRLVLADGLIDASEQNPQWIIDCATLTGAAKMALGNDYHALFSFDDELVAALQESAKEENEPFWRLPLEEFHRSHLPSSFADLNNIASGANTAGASTAAAFLSHFVKNYQQGWLHIDCSATYRKSAVEQWATGATGLGVRTLANLLLSNAK</sequence>
<keyword id="KW-0031">Aminopeptidase</keyword>
<keyword id="KW-0963">Cytoplasm</keyword>
<keyword id="KW-0378">Hydrolase</keyword>
<keyword id="KW-0464">Manganese</keyword>
<keyword id="KW-0479">Metal-binding</keyword>
<keyword id="KW-0645">Protease</keyword>
<dbReference type="EC" id="3.4.11.23" evidence="1"/>
<dbReference type="EMBL" id="CP001657">
    <property type="protein sequence ID" value="ACT14047.1"/>
    <property type="molecule type" value="Genomic_DNA"/>
</dbReference>
<dbReference type="RefSeq" id="WP_015841201.1">
    <property type="nucleotide sequence ID" value="NC_012917.1"/>
</dbReference>
<dbReference type="SMR" id="C6DBI4"/>
<dbReference type="STRING" id="561230.PC1_3024"/>
<dbReference type="MEROPS" id="M17.004"/>
<dbReference type="KEGG" id="pct:PC1_3024"/>
<dbReference type="eggNOG" id="COG0260">
    <property type="taxonomic scope" value="Bacteria"/>
</dbReference>
<dbReference type="HOGENOM" id="CLU_013734_7_1_6"/>
<dbReference type="OrthoDB" id="9809354at2"/>
<dbReference type="Proteomes" id="UP000002736">
    <property type="component" value="Chromosome"/>
</dbReference>
<dbReference type="GO" id="GO:0005737">
    <property type="term" value="C:cytoplasm"/>
    <property type="evidence" value="ECO:0007669"/>
    <property type="project" value="UniProtKB-SubCell"/>
</dbReference>
<dbReference type="GO" id="GO:0030145">
    <property type="term" value="F:manganese ion binding"/>
    <property type="evidence" value="ECO:0007669"/>
    <property type="project" value="UniProtKB-UniRule"/>
</dbReference>
<dbReference type="GO" id="GO:0070006">
    <property type="term" value="F:metalloaminopeptidase activity"/>
    <property type="evidence" value="ECO:0007669"/>
    <property type="project" value="InterPro"/>
</dbReference>
<dbReference type="GO" id="GO:0006508">
    <property type="term" value="P:proteolysis"/>
    <property type="evidence" value="ECO:0007669"/>
    <property type="project" value="UniProtKB-UniRule"/>
</dbReference>
<dbReference type="CDD" id="cd00433">
    <property type="entry name" value="Peptidase_M17"/>
    <property type="match status" value="1"/>
</dbReference>
<dbReference type="FunFam" id="3.40.630.10:FF:000037">
    <property type="entry name" value="Peptidase B"/>
    <property type="match status" value="1"/>
</dbReference>
<dbReference type="Gene3D" id="3.40.630.10">
    <property type="entry name" value="Zn peptidases"/>
    <property type="match status" value="1"/>
</dbReference>
<dbReference type="HAMAP" id="MF_00504">
    <property type="entry name" value="Aminopeptidase_M17"/>
    <property type="match status" value="1"/>
</dbReference>
<dbReference type="InterPro" id="IPR011356">
    <property type="entry name" value="Leucine_aapep/pepB"/>
</dbReference>
<dbReference type="InterPro" id="IPR047620">
    <property type="entry name" value="M17_PepB-like_N"/>
</dbReference>
<dbReference type="InterPro" id="IPR008330">
    <property type="entry name" value="Pept_M17_PepB"/>
</dbReference>
<dbReference type="InterPro" id="IPR000819">
    <property type="entry name" value="Peptidase_M17_C"/>
</dbReference>
<dbReference type="NCBIfam" id="NF003450">
    <property type="entry name" value="PRK05015.1"/>
    <property type="match status" value="1"/>
</dbReference>
<dbReference type="PANTHER" id="PTHR11963">
    <property type="entry name" value="LEUCINE AMINOPEPTIDASE-RELATED"/>
    <property type="match status" value="1"/>
</dbReference>
<dbReference type="PANTHER" id="PTHR11963:SF20">
    <property type="entry name" value="PEPTIDASE B"/>
    <property type="match status" value="1"/>
</dbReference>
<dbReference type="Pfam" id="PF12404">
    <property type="entry name" value="DUF3663"/>
    <property type="match status" value="1"/>
</dbReference>
<dbReference type="Pfam" id="PF00883">
    <property type="entry name" value="Peptidase_M17"/>
    <property type="match status" value="1"/>
</dbReference>
<dbReference type="PIRSF" id="PIRSF036388">
    <property type="entry name" value="Ctsl_amnpptdse_B"/>
    <property type="match status" value="1"/>
</dbReference>
<dbReference type="PRINTS" id="PR00481">
    <property type="entry name" value="LAMNOPPTDASE"/>
</dbReference>
<dbReference type="SUPFAM" id="SSF53187">
    <property type="entry name" value="Zn-dependent exopeptidases"/>
    <property type="match status" value="1"/>
</dbReference>
<dbReference type="PROSITE" id="PS00631">
    <property type="entry name" value="CYTOSOL_AP"/>
    <property type="match status" value="1"/>
</dbReference>
<gene>
    <name evidence="1" type="primary">pepB</name>
    <name type="ordered locus">PC1_3024</name>
</gene>
<reference key="1">
    <citation type="submission" date="2009-07" db="EMBL/GenBank/DDBJ databases">
        <title>Complete sequence of Pectobacterium carotovorum subsp. carotovorum PC1.</title>
        <authorList>
            <consortium name="US DOE Joint Genome Institute"/>
            <person name="Lucas S."/>
            <person name="Copeland A."/>
            <person name="Lapidus A."/>
            <person name="Glavina del Rio T."/>
            <person name="Tice H."/>
            <person name="Bruce D."/>
            <person name="Goodwin L."/>
            <person name="Pitluck S."/>
            <person name="Munk A.C."/>
            <person name="Brettin T."/>
            <person name="Detter J.C."/>
            <person name="Han C."/>
            <person name="Tapia R."/>
            <person name="Larimer F."/>
            <person name="Land M."/>
            <person name="Hauser L."/>
            <person name="Kyrpides N."/>
            <person name="Mikhailova N."/>
            <person name="Balakrishnan V."/>
            <person name="Glasner J."/>
            <person name="Perna N.T."/>
        </authorList>
    </citation>
    <scope>NUCLEOTIDE SEQUENCE [LARGE SCALE GENOMIC DNA]</scope>
    <source>
        <strain>PC1</strain>
    </source>
</reference>
<organism>
    <name type="scientific">Pectobacterium carotovorum subsp. carotovorum (strain PC1)</name>
    <dbReference type="NCBI Taxonomy" id="561230"/>
    <lineage>
        <taxon>Bacteria</taxon>
        <taxon>Pseudomonadati</taxon>
        <taxon>Pseudomonadota</taxon>
        <taxon>Gammaproteobacteria</taxon>
        <taxon>Enterobacterales</taxon>
        <taxon>Pectobacteriaceae</taxon>
        <taxon>Pectobacterium</taxon>
    </lineage>
</organism>
<accession>C6DBI4</accession>